<gene>
    <name evidence="1" type="primary">argG</name>
    <name type="ordered locus">Bcenmc03_3809</name>
</gene>
<sequence>MSTILESLPTGQKVGIAFSGGLDTSAALHWMKLKGAVPYAYTANLGQPDEDDYDAIPKRAIEYGAAGARLIDCRAQLVAEGIAALQSGAFHITTAGVTYFNTTPIGRAVTGTMLVAAMKEDGVNIWGDGSTYKGNDIERFYRYGLLVNPDLKIYKPWLDQTFIDELGGRAEMSEFMNQAGFAYKMSAEKAYSTDSNLLGATHEAKDLESLESGIKIVNPIMGVAFWRDDVKIAAEEVTVRFEAGQPVALNGVEFKDQVELLLEANRIGGRHGLGMSDQIENRIIEAKSRGIYEAPGLALLYIAYERLVTGIHNEDTIEQYRENGRRLGRLLYQGRWFDPQAIMLRETAQRWVARAITGEVKIELRRGNDYSILSTKSPNLTYQPERLSMEKVASTFSPRDRIGQLTMRNLDITDTRDKLRVYSQVGLLTPGETSALPQIKGDGDK</sequence>
<keyword id="KW-0028">Amino-acid biosynthesis</keyword>
<keyword id="KW-0055">Arginine biosynthesis</keyword>
<keyword id="KW-0067">ATP-binding</keyword>
<keyword id="KW-0963">Cytoplasm</keyword>
<keyword id="KW-0436">Ligase</keyword>
<keyword id="KW-0547">Nucleotide-binding</keyword>
<feature type="chain" id="PRO_1000129738" description="Argininosuccinate synthase">
    <location>
        <begin position="1"/>
        <end position="445"/>
    </location>
</feature>
<feature type="binding site" evidence="1">
    <location>
        <begin position="17"/>
        <end position="25"/>
    </location>
    <ligand>
        <name>ATP</name>
        <dbReference type="ChEBI" id="CHEBI:30616"/>
    </ligand>
</feature>
<feature type="binding site" evidence="1">
    <location>
        <position position="43"/>
    </location>
    <ligand>
        <name>ATP</name>
        <dbReference type="ChEBI" id="CHEBI:30616"/>
    </ligand>
</feature>
<feature type="binding site" evidence="1">
    <location>
        <position position="99"/>
    </location>
    <ligand>
        <name>L-citrulline</name>
        <dbReference type="ChEBI" id="CHEBI:57743"/>
    </ligand>
</feature>
<feature type="binding site" evidence="1">
    <location>
        <position position="129"/>
    </location>
    <ligand>
        <name>ATP</name>
        <dbReference type="ChEBI" id="CHEBI:30616"/>
    </ligand>
</feature>
<feature type="binding site" evidence="1">
    <location>
        <position position="131"/>
    </location>
    <ligand>
        <name>ATP</name>
        <dbReference type="ChEBI" id="CHEBI:30616"/>
    </ligand>
</feature>
<feature type="binding site" evidence="1">
    <location>
        <position position="131"/>
    </location>
    <ligand>
        <name>L-aspartate</name>
        <dbReference type="ChEBI" id="CHEBI:29991"/>
    </ligand>
</feature>
<feature type="binding site" evidence="1">
    <location>
        <position position="135"/>
    </location>
    <ligand>
        <name>L-aspartate</name>
        <dbReference type="ChEBI" id="CHEBI:29991"/>
    </ligand>
</feature>
<feature type="binding site" evidence="1">
    <location>
        <position position="135"/>
    </location>
    <ligand>
        <name>L-citrulline</name>
        <dbReference type="ChEBI" id="CHEBI:57743"/>
    </ligand>
</feature>
<feature type="binding site" evidence="1">
    <location>
        <position position="136"/>
    </location>
    <ligand>
        <name>ATP</name>
        <dbReference type="ChEBI" id="CHEBI:30616"/>
    </ligand>
</feature>
<feature type="binding site" evidence="1">
    <location>
        <position position="136"/>
    </location>
    <ligand>
        <name>L-aspartate</name>
        <dbReference type="ChEBI" id="CHEBI:29991"/>
    </ligand>
</feature>
<feature type="binding site" evidence="1">
    <location>
        <position position="139"/>
    </location>
    <ligand>
        <name>L-citrulline</name>
        <dbReference type="ChEBI" id="CHEBI:57743"/>
    </ligand>
</feature>
<feature type="binding site" evidence="1">
    <location>
        <position position="192"/>
    </location>
    <ligand>
        <name>L-citrulline</name>
        <dbReference type="ChEBI" id="CHEBI:57743"/>
    </ligand>
</feature>
<feature type="binding site" evidence="1">
    <location>
        <position position="194"/>
    </location>
    <ligand>
        <name>ATP</name>
        <dbReference type="ChEBI" id="CHEBI:30616"/>
    </ligand>
</feature>
<feature type="binding site" evidence="1">
    <location>
        <position position="201"/>
    </location>
    <ligand>
        <name>L-citrulline</name>
        <dbReference type="ChEBI" id="CHEBI:57743"/>
    </ligand>
</feature>
<feature type="binding site" evidence="1">
    <location>
        <position position="203"/>
    </location>
    <ligand>
        <name>L-citrulline</name>
        <dbReference type="ChEBI" id="CHEBI:57743"/>
    </ligand>
</feature>
<feature type="binding site" evidence="1">
    <location>
        <position position="280"/>
    </location>
    <ligand>
        <name>L-citrulline</name>
        <dbReference type="ChEBI" id="CHEBI:57743"/>
    </ligand>
</feature>
<evidence type="ECO:0000255" key="1">
    <source>
        <dbReference type="HAMAP-Rule" id="MF_00581"/>
    </source>
</evidence>
<accession>B1K5H3</accession>
<proteinExistence type="inferred from homology"/>
<protein>
    <recommendedName>
        <fullName evidence="1">Argininosuccinate synthase</fullName>
        <ecNumber evidence="1">6.3.4.5</ecNumber>
    </recommendedName>
    <alternativeName>
        <fullName evidence="1">Citrulline--aspartate ligase</fullName>
    </alternativeName>
</protein>
<reference key="1">
    <citation type="submission" date="2008-02" db="EMBL/GenBank/DDBJ databases">
        <title>Complete sequence of chromosome 2 of Burkholderia cenocepacia MC0-3.</title>
        <authorList>
            <person name="Copeland A."/>
            <person name="Lucas S."/>
            <person name="Lapidus A."/>
            <person name="Barry K."/>
            <person name="Bruce D."/>
            <person name="Goodwin L."/>
            <person name="Glavina del Rio T."/>
            <person name="Dalin E."/>
            <person name="Tice H."/>
            <person name="Pitluck S."/>
            <person name="Chain P."/>
            <person name="Malfatti S."/>
            <person name="Shin M."/>
            <person name="Vergez L."/>
            <person name="Schmutz J."/>
            <person name="Larimer F."/>
            <person name="Land M."/>
            <person name="Hauser L."/>
            <person name="Kyrpides N."/>
            <person name="Mikhailova N."/>
            <person name="Tiedje J."/>
            <person name="Richardson P."/>
        </authorList>
    </citation>
    <scope>NUCLEOTIDE SEQUENCE [LARGE SCALE GENOMIC DNA]</scope>
    <source>
        <strain>MC0-3</strain>
    </source>
</reference>
<comment type="catalytic activity">
    <reaction evidence="1">
        <text>L-citrulline + L-aspartate + ATP = 2-(N(omega)-L-arginino)succinate + AMP + diphosphate + H(+)</text>
        <dbReference type="Rhea" id="RHEA:10932"/>
        <dbReference type="ChEBI" id="CHEBI:15378"/>
        <dbReference type="ChEBI" id="CHEBI:29991"/>
        <dbReference type="ChEBI" id="CHEBI:30616"/>
        <dbReference type="ChEBI" id="CHEBI:33019"/>
        <dbReference type="ChEBI" id="CHEBI:57472"/>
        <dbReference type="ChEBI" id="CHEBI:57743"/>
        <dbReference type="ChEBI" id="CHEBI:456215"/>
        <dbReference type="EC" id="6.3.4.5"/>
    </reaction>
</comment>
<comment type="pathway">
    <text evidence="1">Amino-acid biosynthesis; L-arginine biosynthesis; L-arginine from L-ornithine and carbamoyl phosphate: step 2/3.</text>
</comment>
<comment type="subunit">
    <text evidence="1">Homotetramer.</text>
</comment>
<comment type="subcellular location">
    <subcellularLocation>
        <location evidence="1">Cytoplasm</location>
    </subcellularLocation>
</comment>
<comment type="similarity">
    <text evidence="1">Belongs to the argininosuccinate synthase family. Type 2 subfamily.</text>
</comment>
<dbReference type="EC" id="6.3.4.5" evidence="1"/>
<dbReference type="EMBL" id="CP000959">
    <property type="protein sequence ID" value="ACA92960.1"/>
    <property type="molecule type" value="Genomic_DNA"/>
</dbReference>
<dbReference type="RefSeq" id="WP_006479599.1">
    <property type="nucleotide sequence ID" value="NC_010515.1"/>
</dbReference>
<dbReference type="SMR" id="B1K5H3"/>
<dbReference type="GeneID" id="83050580"/>
<dbReference type="KEGG" id="bcm:Bcenmc03_3809"/>
<dbReference type="HOGENOM" id="CLU_032784_4_1_4"/>
<dbReference type="UniPathway" id="UPA00068">
    <property type="reaction ID" value="UER00113"/>
</dbReference>
<dbReference type="Proteomes" id="UP000002169">
    <property type="component" value="Chromosome 2"/>
</dbReference>
<dbReference type="GO" id="GO:0005737">
    <property type="term" value="C:cytoplasm"/>
    <property type="evidence" value="ECO:0007669"/>
    <property type="project" value="UniProtKB-SubCell"/>
</dbReference>
<dbReference type="GO" id="GO:0004055">
    <property type="term" value="F:argininosuccinate synthase activity"/>
    <property type="evidence" value="ECO:0007669"/>
    <property type="project" value="UniProtKB-UniRule"/>
</dbReference>
<dbReference type="GO" id="GO:0005524">
    <property type="term" value="F:ATP binding"/>
    <property type="evidence" value="ECO:0007669"/>
    <property type="project" value="UniProtKB-UniRule"/>
</dbReference>
<dbReference type="GO" id="GO:0042803">
    <property type="term" value="F:protein homodimerization activity"/>
    <property type="evidence" value="ECO:0007669"/>
    <property type="project" value="InterPro"/>
</dbReference>
<dbReference type="GO" id="GO:0000053">
    <property type="term" value="P:argininosuccinate metabolic process"/>
    <property type="evidence" value="ECO:0007669"/>
    <property type="project" value="TreeGrafter"/>
</dbReference>
<dbReference type="GO" id="GO:0006526">
    <property type="term" value="P:L-arginine biosynthetic process"/>
    <property type="evidence" value="ECO:0007669"/>
    <property type="project" value="UniProtKB-UniRule"/>
</dbReference>
<dbReference type="GO" id="GO:0000050">
    <property type="term" value="P:urea cycle"/>
    <property type="evidence" value="ECO:0007669"/>
    <property type="project" value="TreeGrafter"/>
</dbReference>
<dbReference type="CDD" id="cd01999">
    <property type="entry name" value="ASS"/>
    <property type="match status" value="1"/>
</dbReference>
<dbReference type="FunFam" id="1.10.287.400:FF:000001">
    <property type="entry name" value="Argininosuccinate synthase"/>
    <property type="match status" value="1"/>
</dbReference>
<dbReference type="Gene3D" id="1.10.287.400">
    <property type="match status" value="1"/>
</dbReference>
<dbReference type="Gene3D" id="3.90.1260.10">
    <property type="entry name" value="Argininosuccinate synthetase, chain A, domain 2"/>
    <property type="match status" value="1"/>
</dbReference>
<dbReference type="Gene3D" id="3.40.50.620">
    <property type="entry name" value="HUPs"/>
    <property type="match status" value="1"/>
</dbReference>
<dbReference type="HAMAP" id="MF_00581">
    <property type="entry name" value="Arg_succ_synth_type2"/>
    <property type="match status" value="1"/>
</dbReference>
<dbReference type="InterPro" id="IPR023437">
    <property type="entry name" value="Arg_succ_synth_type2_subfam"/>
</dbReference>
<dbReference type="InterPro" id="IPR048268">
    <property type="entry name" value="Arginosuc_syn_C"/>
</dbReference>
<dbReference type="InterPro" id="IPR048267">
    <property type="entry name" value="Arginosuc_syn_N"/>
</dbReference>
<dbReference type="InterPro" id="IPR001518">
    <property type="entry name" value="Arginosuc_synth"/>
</dbReference>
<dbReference type="InterPro" id="IPR018223">
    <property type="entry name" value="Arginosuc_synth_CS"/>
</dbReference>
<dbReference type="InterPro" id="IPR023434">
    <property type="entry name" value="Arginosuc_synth_type_1_subfam"/>
</dbReference>
<dbReference type="InterPro" id="IPR024074">
    <property type="entry name" value="AS_cat/multimer_dom_body"/>
</dbReference>
<dbReference type="InterPro" id="IPR024073">
    <property type="entry name" value="AS_multimer_C_tail"/>
</dbReference>
<dbReference type="InterPro" id="IPR014729">
    <property type="entry name" value="Rossmann-like_a/b/a_fold"/>
</dbReference>
<dbReference type="NCBIfam" id="TIGR00032">
    <property type="entry name" value="argG"/>
    <property type="match status" value="1"/>
</dbReference>
<dbReference type="NCBIfam" id="NF003779">
    <property type="entry name" value="PRK05370.1"/>
    <property type="match status" value="1"/>
</dbReference>
<dbReference type="PANTHER" id="PTHR11587">
    <property type="entry name" value="ARGININOSUCCINATE SYNTHASE"/>
    <property type="match status" value="1"/>
</dbReference>
<dbReference type="PANTHER" id="PTHR11587:SF2">
    <property type="entry name" value="ARGININOSUCCINATE SYNTHASE"/>
    <property type="match status" value="1"/>
</dbReference>
<dbReference type="Pfam" id="PF20979">
    <property type="entry name" value="Arginosuc_syn_C"/>
    <property type="match status" value="1"/>
</dbReference>
<dbReference type="Pfam" id="PF00764">
    <property type="entry name" value="Arginosuc_synth"/>
    <property type="match status" value="1"/>
</dbReference>
<dbReference type="SUPFAM" id="SSF52402">
    <property type="entry name" value="Adenine nucleotide alpha hydrolases-like"/>
    <property type="match status" value="1"/>
</dbReference>
<dbReference type="SUPFAM" id="SSF69864">
    <property type="entry name" value="Argininosuccinate synthetase, C-terminal domain"/>
    <property type="match status" value="1"/>
</dbReference>
<dbReference type="PROSITE" id="PS00564">
    <property type="entry name" value="ARGININOSUCCIN_SYN_1"/>
    <property type="match status" value="1"/>
</dbReference>
<dbReference type="PROSITE" id="PS00565">
    <property type="entry name" value="ARGININOSUCCIN_SYN_2"/>
    <property type="match status" value="1"/>
</dbReference>
<name>ASSY_BURO0</name>
<organism>
    <name type="scientific">Burkholderia orbicola (strain MC0-3)</name>
    <dbReference type="NCBI Taxonomy" id="406425"/>
    <lineage>
        <taxon>Bacteria</taxon>
        <taxon>Pseudomonadati</taxon>
        <taxon>Pseudomonadota</taxon>
        <taxon>Betaproteobacteria</taxon>
        <taxon>Burkholderiales</taxon>
        <taxon>Burkholderiaceae</taxon>
        <taxon>Burkholderia</taxon>
        <taxon>Burkholderia cepacia complex</taxon>
        <taxon>Burkholderia orbicola</taxon>
    </lineage>
</organism>